<comment type="function">
    <text evidence="1">Catalyzes the radical-mediated synthesis of 5-amino-5-(4-hydroxybenzyl)-6-(D-ribitylimino)-5,6-dihydrouracil from 5-amino-6-(D-ribitylamino)uracil and L-tyrosine.</text>
</comment>
<comment type="catalytic activity">
    <reaction evidence="1">
        <text>5-amino-6-(D-ribitylamino)uracil + L-tyrosine + S-adenosyl-L-methionine = 5-amino-5-(4-hydroxybenzyl)-6-(D-ribitylimino)-5,6-dihydrouracil + 2-iminoacetate + 5'-deoxyadenosine + L-methionine + H(+)</text>
        <dbReference type="Rhea" id="RHEA:55200"/>
        <dbReference type="ChEBI" id="CHEBI:15378"/>
        <dbReference type="ChEBI" id="CHEBI:15934"/>
        <dbReference type="ChEBI" id="CHEBI:17319"/>
        <dbReference type="ChEBI" id="CHEBI:57844"/>
        <dbReference type="ChEBI" id="CHEBI:58315"/>
        <dbReference type="ChEBI" id="CHEBI:59789"/>
        <dbReference type="ChEBI" id="CHEBI:77846"/>
        <dbReference type="ChEBI" id="CHEBI:85936"/>
        <dbReference type="EC" id="2.5.1.147"/>
    </reaction>
</comment>
<comment type="cofactor">
    <cofactor evidence="1">
        <name>[4Fe-4S] cluster</name>
        <dbReference type="ChEBI" id="CHEBI:49883"/>
    </cofactor>
    <text evidence="1">Binds 1 [4Fe-4S] cluster. The cluster is coordinated with 3 cysteines and an exchangeable S-adenosyl-L-methionine.</text>
</comment>
<comment type="pathway">
    <text evidence="1">Cofactor biosynthesis; coenzyme F0 biosynthesis.</text>
</comment>
<comment type="subunit">
    <text evidence="1">Consists of two subunits, CofG and CofH.</text>
</comment>
<comment type="similarity">
    <text evidence="1">Belongs to the radical SAM superfamily. CofH family.</text>
</comment>
<proteinExistence type="inferred from homology"/>
<organism>
    <name type="scientific">Nostoc punctiforme (strain ATCC 29133 / PCC 73102)</name>
    <dbReference type="NCBI Taxonomy" id="63737"/>
    <lineage>
        <taxon>Bacteria</taxon>
        <taxon>Bacillati</taxon>
        <taxon>Cyanobacteriota</taxon>
        <taxon>Cyanophyceae</taxon>
        <taxon>Nostocales</taxon>
        <taxon>Nostocaceae</taxon>
        <taxon>Nostoc</taxon>
    </lineage>
</organism>
<feature type="chain" id="PRO_1000185855" description="5-amino-6-(D-ribitylamino)uracil--L-tyrosine 4-hydroxyphenyl transferase">
    <location>
        <begin position="1"/>
        <end position="380"/>
    </location>
</feature>
<feature type="domain" description="Radical SAM core" evidence="2">
    <location>
        <begin position="56"/>
        <end position="303"/>
    </location>
</feature>
<feature type="binding site" evidence="1">
    <location>
        <position position="70"/>
    </location>
    <ligand>
        <name>[4Fe-4S] cluster</name>
        <dbReference type="ChEBI" id="CHEBI:49883"/>
        <note>4Fe-4S-S-AdoMet</note>
    </ligand>
</feature>
<feature type="binding site" evidence="1">
    <location>
        <position position="74"/>
    </location>
    <ligand>
        <name>[4Fe-4S] cluster</name>
        <dbReference type="ChEBI" id="CHEBI:49883"/>
        <note>4Fe-4S-S-AdoMet</note>
    </ligand>
</feature>
<feature type="binding site" evidence="1">
    <location>
        <position position="77"/>
    </location>
    <ligand>
        <name>[4Fe-4S] cluster</name>
        <dbReference type="ChEBI" id="CHEBI:49883"/>
        <note>4Fe-4S-S-AdoMet</note>
    </ligand>
</feature>
<reference key="1">
    <citation type="journal article" date="2013" name="Plant Physiol.">
        <title>A Nostoc punctiforme Sugar Transporter Necessary to Establish a Cyanobacterium-Plant Symbiosis.</title>
        <authorList>
            <person name="Ekman M."/>
            <person name="Picossi S."/>
            <person name="Campbell E.L."/>
            <person name="Meeks J.C."/>
            <person name="Flores E."/>
        </authorList>
    </citation>
    <scope>NUCLEOTIDE SEQUENCE [LARGE SCALE GENOMIC DNA]</scope>
    <source>
        <strain>ATCC 29133 / PCC 73102</strain>
    </source>
</reference>
<evidence type="ECO:0000255" key="1">
    <source>
        <dbReference type="HAMAP-Rule" id="MF_01612"/>
    </source>
</evidence>
<evidence type="ECO:0000255" key="2">
    <source>
        <dbReference type="PROSITE-ProRule" id="PRU01266"/>
    </source>
</evidence>
<name>COFH_NOSP7</name>
<protein>
    <recommendedName>
        <fullName evidence="1">5-amino-6-(D-ribitylamino)uracil--L-tyrosine 4-hydroxyphenyl transferase</fullName>
        <ecNumber evidence="1">2.5.1.147</ecNumber>
    </recommendedName>
    <alternativeName>
        <fullName evidence="1">FO synthase subunit 2</fullName>
    </alternativeName>
</protein>
<gene>
    <name evidence="1" type="primary">cofH</name>
    <name type="ordered locus">Npun_R6205</name>
</gene>
<accession>B2IW30</accession>
<keyword id="KW-0004">4Fe-4S</keyword>
<keyword id="KW-0408">Iron</keyword>
<keyword id="KW-0411">Iron-sulfur</keyword>
<keyword id="KW-0479">Metal-binding</keyword>
<keyword id="KW-1185">Reference proteome</keyword>
<keyword id="KW-0949">S-adenosyl-L-methionine</keyword>
<keyword id="KW-0808">Transferase</keyword>
<dbReference type="EC" id="2.5.1.147" evidence="1"/>
<dbReference type="EMBL" id="CP001037">
    <property type="protein sequence ID" value="ACC84491.1"/>
    <property type="molecule type" value="Genomic_DNA"/>
</dbReference>
<dbReference type="RefSeq" id="WP_012412431.1">
    <property type="nucleotide sequence ID" value="NC_010628.1"/>
</dbReference>
<dbReference type="SMR" id="B2IW30"/>
<dbReference type="STRING" id="63737.Npun_R6205"/>
<dbReference type="EnsemblBacteria" id="ACC84491">
    <property type="protein sequence ID" value="ACC84491"/>
    <property type="gene ID" value="Npun_R6205"/>
</dbReference>
<dbReference type="KEGG" id="npu:Npun_R6205"/>
<dbReference type="eggNOG" id="COG1060">
    <property type="taxonomic scope" value="Bacteria"/>
</dbReference>
<dbReference type="HOGENOM" id="CLU_040406_1_0_3"/>
<dbReference type="OrthoDB" id="9802027at2"/>
<dbReference type="PhylomeDB" id="B2IW30"/>
<dbReference type="UniPathway" id="UPA00072"/>
<dbReference type="Proteomes" id="UP000001191">
    <property type="component" value="Chromosome"/>
</dbReference>
<dbReference type="GO" id="GO:0051539">
    <property type="term" value="F:4 iron, 4 sulfur cluster binding"/>
    <property type="evidence" value="ECO:0007669"/>
    <property type="project" value="UniProtKB-KW"/>
</dbReference>
<dbReference type="GO" id="GO:0141093">
    <property type="term" value="F:5-amino-6-(D-ribitylamino)uracil--L-tyrosine 4-hydroxyphenyl transferase activity"/>
    <property type="evidence" value="ECO:0007669"/>
    <property type="project" value="UniProtKB-EC"/>
</dbReference>
<dbReference type="GO" id="GO:0044689">
    <property type="term" value="F:7,8-didemethyl-8-hydroxy-5-deazariboflavin synthase activity"/>
    <property type="evidence" value="ECO:0007669"/>
    <property type="project" value="TreeGrafter"/>
</dbReference>
<dbReference type="GO" id="GO:0005506">
    <property type="term" value="F:iron ion binding"/>
    <property type="evidence" value="ECO:0007669"/>
    <property type="project" value="UniProtKB-UniRule"/>
</dbReference>
<dbReference type="CDD" id="cd01335">
    <property type="entry name" value="Radical_SAM"/>
    <property type="match status" value="1"/>
</dbReference>
<dbReference type="Gene3D" id="3.20.20.70">
    <property type="entry name" value="Aldolase class I"/>
    <property type="match status" value="1"/>
</dbReference>
<dbReference type="HAMAP" id="MF_01612">
    <property type="entry name" value="FO_synth_sub2"/>
    <property type="match status" value="1"/>
</dbReference>
<dbReference type="InterPro" id="IPR013785">
    <property type="entry name" value="Aldolase_TIM"/>
</dbReference>
<dbReference type="InterPro" id="IPR045567">
    <property type="entry name" value="CofH/MnqC-like_C"/>
</dbReference>
<dbReference type="InterPro" id="IPR019940">
    <property type="entry name" value="CofH_family"/>
</dbReference>
<dbReference type="InterPro" id="IPR034405">
    <property type="entry name" value="F420"/>
</dbReference>
<dbReference type="InterPro" id="IPR020050">
    <property type="entry name" value="FO_synthase_su2"/>
</dbReference>
<dbReference type="InterPro" id="IPR007197">
    <property type="entry name" value="rSAM"/>
</dbReference>
<dbReference type="NCBIfam" id="TIGR00423">
    <property type="entry name" value="CofH family radical SAM protein"/>
    <property type="match status" value="1"/>
</dbReference>
<dbReference type="NCBIfam" id="TIGR03551">
    <property type="entry name" value="F420_cofH"/>
    <property type="match status" value="1"/>
</dbReference>
<dbReference type="NCBIfam" id="NF005609">
    <property type="entry name" value="PRK07360.1"/>
    <property type="match status" value="1"/>
</dbReference>
<dbReference type="PANTHER" id="PTHR43076">
    <property type="entry name" value="FO SYNTHASE (COFH)"/>
    <property type="match status" value="1"/>
</dbReference>
<dbReference type="PANTHER" id="PTHR43076:SF1">
    <property type="entry name" value="LIPOYL SYNTHASE 2"/>
    <property type="match status" value="1"/>
</dbReference>
<dbReference type="Pfam" id="PF19288">
    <property type="entry name" value="CofH_C"/>
    <property type="match status" value="1"/>
</dbReference>
<dbReference type="Pfam" id="PF04055">
    <property type="entry name" value="Radical_SAM"/>
    <property type="match status" value="1"/>
</dbReference>
<dbReference type="PIRSF" id="PIRSF004762">
    <property type="entry name" value="CHP00423"/>
    <property type="match status" value="1"/>
</dbReference>
<dbReference type="SFLD" id="SFLDF00293">
    <property type="entry name" value="((2_3_4_5-tetrahydroxypentyl)a"/>
    <property type="match status" value="1"/>
</dbReference>
<dbReference type="SFLD" id="SFLDG01064">
    <property type="entry name" value="F420__menaquinone_cofactor_bio"/>
    <property type="match status" value="1"/>
</dbReference>
<dbReference type="SFLD" id="SFLDG01389">
    <property type="entry name" value="menaquinone_synthsis_involved"/>
    <property type="match status" value="1"/>
</dbReference>
<dbReference type="SUPFAM" id="SSF102114">
    <property type="entry name" value="Radical SAM enzymes"/>
    <property type="match status" value="1"/>
</dbReference>
<dbReference type="PROSITE" id="PS51918">
    <property type="entry name" value="RADICAL_SAM"/>
    <property type="match status" value="1"/>
</dbReference>
<sequence length="380" mass="41882">MLTKIAVEKILERALMGYDLSPQEGVVLLQQTEPEAIAAIRATSDTLRHTQAGDMVTYIINRNINFTNICEQHCSFCAFRRDDGDVGAYWLDSAQILEKATDAVRRGATEICMQGGLNPQAQINGKSLPYYLKVVETIKQEFPQIHLHAFSPQEVEFIARLDGLEYADVIIALRDAGVGSMPGTAAEVLDDEVRRILCPEKINTATWLGIVSTAHKLGLHTTSTMLSGHIETHEQQIGHLEKLRSLQQTAINQGYPAKITEFILLPFVGQEAPKPLRRRVGRDQPILSDALLLGAVARIYLGNWIPNHQQSWVKLGLAGATEALVWGCNDIGGTLMEEHITTMAGALGGTCMEVETLKTAIASLGRPYQQRNTLYQKVNS</sequence>